<gene>
    <name evidence="1" type="primary">ispG</name>
    <name type="ordered locus">SSON_2597</name>
</gene>
<evidence type="ECO:0000255" key="1">
    <source>
        <dbReference type="HAMAP-Rule" id="MF_00159"/>
    </source>
</evidence>
<feature type="chain" id="PRO_1000011528" description="4-hydroxy-3-methylbut-2-en-1-yl diphosphate synthase (flavodoxin)">
    <location>
        <begin position="1"/>
        <end position="372"/>
    </location>
</feature>
<feature type="binding site" evidence="1">
    <location>
        <position position="270"/>
    </location>
    <ligand>
        <name>[4Fe-4S] cluster</name>
        <dbReference type="ChEBI" id="CHEBI:49883"/>
    </ligand>
</feature>
<feature type="binding site" evidence="1">
    <location>
        <position position="273"/>
    </location>
    <ligand>
        <name>[4Fe-4S] cluster</name>
        <dbReference type="ChEBI" id="CHEBI:49883"/>
    </ligand>
</feature>
<feature type="binding site" evidence="1">
    <location>
        <position position="305"/>
    </location>
    <ligand>
        <name>[4Fe-4S] cluster</name>
        <dbReference type="ChEBI" id="CHEBI:49883"/>
    </ligand>
</feature>
<feature type="binding site" evidence="1">
    <location>
        <position position="312"/>
    </location>
    <ligand>
        <name>[4Fe-4S] cluster</name>
        <dbReference type="ChEBI" id="CHEBI:49883"/>
    </ligand>
</feature>
<comment type="function">
    <text evidence="1">Converts 2C-methyl-D-erythritol 2,4-cyclodiphosphate (ME-2,4cPP) into 1-hydroxy-2-methyl-2-(E)-butenyl 4-diphosphate.</text>
</comment>
<comment type="catalytic activity">
    <reaction evidence="1">
        <text>(2E)-4-hydroxy-3-methylbut-2-enyl diphosphate + oxidized [flavodoxin] + H2O + 2 H(+) = 2-C-methyl-D-erythritol 2,4-cyclic diphosphate + reduced [flavodoxin]</text>
        <dbReference type="Rhea" id="RHEA:43604"/>
        <dbReference type="Rhea" id="RHEA-COMP:10622"/>
        <dbReference type="Rhea" id="RHEA-COMP:10623"/>
        <dbReference type="ChEBI" id="CHEBI:15377"/>
        <dbReference type="ChEBI" id="CHEBI:15378"/>
        <dbReference type="ChEBI" id="CHEBI:57618"/>
        <dbReference type="ChEBI" id="CHEBI:58210"/>
        <dbReference type="ChEBI" id="CHEBI:58483"/>
        <dbReference type="ChEBI" id="CHEBI:128753"/>
        <dbReference type="EC" id="1.17.7.3"/>
    </reaction>
</comment>
<comment type="cofactor">
    <cofactor evidence="1">
        <name>[4Fe-4S] cluster</name>
        <dbReference type="ChEBI" id="CHEBI:49883"/>
    </cofactor>
    <text evidence="1">Binds 1 [4Fe-4S] cluster.</text>
</comment>
<comment type="pathway">
    <text evidence="1">Isoprenoid biosynthesis; isopentenyl diphosphate biosynthesis via DXP pathway; isopentenyl diphosphate from 1-deoxy-D-xylulose 5-phosphate: step 5/6.</text>
</comment>
<comment type="similarity">
    <text evidence="1">Belongs to the IspG family.</text>
</comment>
<protein>
    <recommendedName>
        <fullName evidence="1">4-hydroxy-3-methylbut-2-en-1-yl diphosphate synthase (flavodoxin)</fullName>
        <ecNumber evidence="1">1.17.7.3</ecNumber>
    </recommendedName>
    <alternativeName>
        <fullName evidence="1">1-hydroxy-2-methyl-2-(E)-butenyl 4-diphosphate synthase</fullName>
    </alternativeName>
</protein>
<dbReference type="EC" id="1.17.7.3" evidence="1"/>
<dbReference type="EMBL" id="CP000038">
    <property type="protein sequence ID" value="AAZ89225.1"/>
    <property type="molecule type" value="Genomic_DNA"/>
</dbReference>
<dbReference type="RefSeq" id="WP_000551818.1">
    <property type="nucleotide sequence ID" value="NC_007384.1"/>
</dbReference>
<dbReference type="SMR" id="Q3YZ37"/>
<dbReference type="GeneID" id="93774621"/>
<dbReference type="KEGG" id="ssn:SSON_2597"/>
<dbReference type="HOGENOM" id="CLU_042258_0_0_6"/>
<dbReference type="UniPathway" id="UPA00056">
    <property type="reaction ID" value="UER00096"/>
</dbReference>
<dbReference type="Proteomes" id="UP000002529">
    <property type="component" value="Chromosome"/>
</dbReference>
<dbReference type="GO" id="GO:0051539">
    <property type="term" value="F:4 iron, 4 sulfur cluster binding"/>
    <property type="evidence" value="ECO:0007669"/>
    <property type="project" value="UniProtKB-UniRule"/>
</dbReference>
<dbReference type="GO" id="GO:0046429">
    <property type="term" value="F:4-hydroxy-3-methylbut-2-en-1-yl diphosphate synthase activity (ferredoxin)"/>
    <property type="evidence" value="ECO:0007669"/>
    <property type="project" value="UniProtKB-UniRule"/>
</dbReference>
<dbReference type="GO" id="GO:0141197">
    <property type="term" value="F:4-hydroxy-3-methylbut-2-enyl-diphosphate synthase activity (flavodoxin)"/>
    <property type="evidence" value="ECO:0007669"/>
    <property type="project" value="UniProtKB-EC"/>
</dbReference>
<dbReference type="GO" id="GO:0005506">
    <property type="term" value="F:iron ion binding"/>
    <property type="evidence" value="ECO:0007669"/>
    <property type="project" value="InterPro"/>
</dbReference>
<dbReference type="GO" id="GO:0019288">
    <property type="term" value="P:isopentenyl diphosphate biosynthetic process, methylerythritol 4-phosphate pathway"/>
    <property type="evidence" value="ECO:0007669"/>
    <property type="project" value="UniProtKB-UniRule"/>
</dbReference>
<dbReference type="GO" id="GO:0016114">
    <property type="term" value="P:terpenoid biosynthetic process"/>
    <property type="evidence" value="ECO:0007669"/>
    <property type="project" value="InterPro"/>
</dbReference>
<dbReference type="FunFam" id="3.20.20.20:FF:000001">
    <property type="entry name" value="4-hydroxy-3-methylbut-2-en-1-yl diphosphate synthase (flavodoxin)"/>
    <property type="match status" value="1"/>
</dbReference>
<dbReference type="FunFam" id="3.30.413.10:FF:000002">
    <property type="entry name" value="4-hydroxy-3-methylbut-2-en-1-yl diphosphate synthase (flavodoxin)"/>
    <property type="match status" value="1"/>
</dbReference>
<dbReference type="Gene3D" id="3.20.20.20">
    <property type="entry name" value="Dihydropteroate synthase-like"/>
    <property type="match status" value="1"/>
</dbReference>
<dbReference type="Gene3D" id="3.30.413.10">
    <property type="entry name" value="Sulfite Reductase Hemoprotein, domain 1"/>
    <property type="match status" value="1"/>
</dbReference>
<dbReference type="HAMAP" id="MF_00159">
    <property type="entry name" value="IspG"/>
    <property type="match status" value="1"/>
</dbReference>
<dbReference type="InterPro" id="IPR011005">
    <property type="entry name" value="Dihydropteroate_synth-like_sf"/>
</dbReference>
<dbReference type="InterPro" id="IPR016425">
    <property type="entry name" value="IspG_bac"/>
</dbReference>
<dbReference type="InterPro" id="IPR004588">
    <property type="entry name" value="IspG_bac-typ"/>
</dbReference>
<dbReference type="InterPro" id="IPR045854">
    <property type="entry name" value="NO2/SO3_Rdtase_4Fe4S_sf"/>
</dbReference>
<dbReference type="NCBIfam" id="TIGR00612">
    <property type="entry name" value="ispG_gcpE"/>
    <property type="match status" value="1"/>
</dbReference>
<dbReference type="NCBIfam" id="NF001540">
    <property type="entry name" value="PRK00366.1"/>
    <property type="match status" value="1"/>
</dbReference>
<dbReference type="PANTHER" id="PTHR30454">
    <property type="entry name" value="4-HYDROXY-3-METHYLBUT-2-EN-1-YL DIPHOSPHATE SYNTHASE"/>
    <property type="match status" value="1"/>
</dbReference>
<dbReference type="PANTHER" id="PTHR30454:SF0">
    <property type="entry name" value="4-HYDROXY-3-METHYLBUT-2-EN-1-YL DIPHOSPHATE SYNTHASE (FERREDOXIN), CHLOROPLASTIC"/>
    <property type="match status" value="1"/>
</dbReference>
<dbReference type="Pfam" id="PF04551">
    <property type="entry name" value="GcpE"/>
    <property type="match status" value="1"/>
</dbReference>
<dbReference type="PIRSF" id="PIRSF004640">
    <property type="entry name" value="IspG"/>
    <property type="match status" value="1"/>
</dbReference>
<dbReference type="SUPFAM" id="SSF51717">
    <property type="entry name" value="Dihydropteroate synthetase-like"/>
    <property type="match status" value="1"/>
</dbReference>
<dbReference type="SUPFAM" id="SSF56014">
    <property type="entry name" value="Nitrite and sulphite reductase 4Fe-4S domain-like"/>
    <property type="match status" value="1"/>
</dbReference>
<sequence length="372" mass="40712">MHNQAPIQRRKSTRIYVGNVPIGDGAPIAVQSMTNTRTTDVEATVNQIKALERVGADIVRVSVPTMDAAEAFKLIKQRVNVPLVADIHFDYRIALKVAEYGVDCLRINPGNIGNEERIRMVVDCARDKNIPIRIGVNAGSLEKDLQEKYGEPTPQALLESAMRHVDHLDRLNFDQFKVSVKASDVFLAVESYRLLAKQIDQPLHLGITEAGGARSGAVKSAIGLGLLLSEGIGDTLRVSLAADPVEEIKVGFDILKSLRIRSRGINFIACPTCSRQEFDVIGTVNALEQRLEDIITPMDVSIIGCVVNGPGEALVSTLGVTGGNKKSGLYEDGVRKDRLDNNDMIDQLEARIRAKASQLDEARRIDVQQVEK</sequence>
<reference key="1">
    <citation type="journal article" date="2005" name="Nucleic Acids Res.">
        <title>Genome dynamics and diversity of Shigella species, the etiologic agents of bacillary dysentery.</title>
        <authorList>
            <person name="Yang F."/>
            <person name="Yang J."/>
            <person name="Zhang X."/>
            <person name="Chen L."/>
            <person name="Jiang Y."/>
            <person name="Yan Y."/>
            <person name="Tang X."/>
            <person name="Wang J."/>
            <person name="Xiong Z."/>
            <person name="Dong J."/>
            <person name="Xue Y."/>
            <person name="Zhu Y."/>
            <person name="Xu X."/>
            <person name="Sun L."/>
            <person name="Chen S."/>
            <person name="Nie H."/>
            <person name="Peng J."/>
            <person name="Xu J."/>
            <person name="Wang Y."/>
            <person name="Yuan Z."/>
            <person name="Wen Y."/>
            <person name="Yao Z."/>
            <person name="Shen Y."/>
            <person name="Qiang B."/>
            <person name="Hou Y."/>
            <person name="Yu J."/>
            <person name="Jin Q."/>
        </authorList>
    </citation>
    <scope>NUCLEOTIDE SEQUENCE [LARGE SCALE GENOMIC DNA]</scope>
    <source>
        <strain>Ss046</strain>
    </source>
</reference>
<organism>
    <name type="scientific">Shigella sonnei (strain Ss046)</name>
    <dbReference type="NCBI Taxonomy" id="300269"/>
    <lineage>
        <taxon>Bacteria</taxon>
        <taxon>Pseudomonadati</taxon>
        <taxon>Pseudomonadota</taxon>
        <taxon>Gammaproteobacteria</taxon>
        <taxon>Enterobacterales</taxon>
        <taxon>Enterobacteriaceae</taxon>
        <taxon>Shigella</taxon>
    </lineage>
</organism>
<accession>Q3YZ37</accession>
<name>ISPG_SHISS</name>
<keyword id="KW-0004">4Fe-4S</keyword>
<keyword id="KW-0408">Iron</keyword>
<keyword id="KW-0411">Iron-sulfur</keyword>
<keyword id="KW-0414">Isoprene biosynthesis</keyword>
<keyword id="KW-0479">Metal-binding</keyword>
<keyword id="KW-0560">Oxidoreductase</keyword>
<keyword id="KW-1185">Reference proteome</keyword>
<proteinExistence type="inferred from homology"/>